<comment type="function">
    <text evidence="1">Binds to 23S rRNA. Forms part of two intersubunit bridges in the 70S ribosome.</text>
</comment>
<comment type="subunit">
    <text evidence="1">Part of the 50S ribosomal subunit. Forms a cluster with proteins L3 and L19. In the 70S ribosome, L14 and L19 interact and together make contacts with the 16S rRNA in bridges B5 and B8.</text>
</comment>
<comment type="similarity">
    <text evidence="1">Belongs to the universal ribosomal protein uL14 family.</text>
</comment>
<evidence type="ECO:0000255" key="1">
    <source>
        <dbReference type="HAMAP-Rule" id="MF_01367"/>
    </source>
</evidence>
<evidence type="ECO:0000305" key="2"/>
<dbReference type="EMBL" id="CP000647">
    <property type="protein sequence ID" value="ABR79096.1"/>
    <property type="molecule type" value="Genomic_DNA"/>
</dbReference>
<dbReference type="RefSeq" id="WP_002919748.1">
    <property type="nucleotide sequence ID" value="NC_009648.1"/>
</dbReference>
<dbReference type="SMR" id="A6TEW2"/>
<dbReference type="STRING" id="272620.KPN_03709"/>
<dbReference type="jPOST" id="A6TEW2"/>
<dbReference type="PaxDb" id="272620-KPN_03709"/>
<dbReference type="EnsemblBacteria" id="ABR79096">
    <property type="protein sequence ID" value="ABR79096"/>
    <property type="gene ID" value="KPN_03709"/>
</dbReference>
<dbReference type="GeneID" id="97442850"/>
<dbReference type="KEGG" id="kpn:KPN_03709"/>
<dbReference type="HOGENOM" id="CLU_095071_2_1_6"/>
<dbReference type="Proteomes" id="UP000000265">
    <property type="component" value="Chromosome"/>
</dbReference>
<dbReference type="GO" id="GO:0022625">
    <property type="term" value="C:cytosolic large ribosomal subunit"/>
    <property type="evidence" value="ECO:0007669"/>
    <property type="project" value="TreeGrafter"/>
</dbReference>
<dbReference type="GO" id="GO:0070180">
    <property type="term" value="F:large ribosomal subunit rRNA binding"/>
    <property type="evidence" value="ECO:0007669"/>
    <property type="project" value="TreeGrafter"/>
</dbReference>
<dbReference type="GO" id="GO:0003735">
    <property type="term" value="F:structural constituent of ribosome"/>
    <property type="evidence" value="ECO:0007669"/>
    <property type="project" value="InterPro"/>
</dbReference>
<dbReference type="GO" id="GO:0006412">
    <property type="term" value="P:translation"/>
    <property type="evidence" value="ECO:0007669"/>
    <property type="project" value="UniProtKB-UniRule"/>
</dbReference>
<dbReference type="CDD" id="cd00337">
    <property type="entry name" value="Ribosomal_uL14"/>
    <property type="match status" value="1"/>
</dbReference>
<dbReference type="FunFam" id="2.40.150.20:FF:000001">
    <property type="entry name" value="50S ribosomal protein L14"/>
    <property type="match status" value="1"/>
</dbReference>
<dbReference type="Gene3D" id="2.40.150.20">
    <property type="entry name" value="Ribosomal protein L14"/>
    <property type="match status" value="1"/>
</dbReference>
<dbReference type="HAMAP" id="MF_01367">
    <property type="entry name" value="Ribosomal_uL14"/>
    <property type="match status" value="1"/>
</dbReference>
<dbReference type="InterPro" id="IPR000218">
    <property type="entry name" value="Ribosomal_uL14"/>
</dbReference>
<dbReference type="InterPro" id="IPR005745">
    <property type="entry name" value="Ribosomal_uL14_bac-type"/>
</dbReference>
<dbReference type="InterPro" id="IPR019972">
    <property type="entry name" value="Ribosomal_uL14_CS"/>
</dbReference>
<dbReference type="InterPro" id="IPR036853">
    <property type="entry name" value="Ribosomal_uL14_sf"/>
</dbReference>
<dbReference type="NCBIfam" id="TIGR01067">
    <property type="entry name" value="rplN_bact"/>
    <property type="match status" value="1"/>
</dbReference>
<dbReference type="PANTHER" id="PTHR11761">
    <property type="entry name" value="50S/60S RIBOSOMAL PROTEIN L14/L23"/>
    <property type="match status" value="1"/>
</dbReference>
<dbReference type="PANTHER" id="PTHR11761:SF3">
    <property type="entry name" value="LARGE RIBOSOMAL SUBUNIT PROTEIN UL14M"/>
    <property type="match status" value="1"/>
</dbReference>
<dbReference type="Pfam" id="PF00238">
    <property type="entry name" value="Ribosomal_L14"/>
    <property type="match status" value="1"/>
</dbReference>
<dbReference type="SMART" id="SM01374">
    <property type="entry name" value="Ribosomal_L14"/>
    <property type="match status" value="1"/>
</dbReference>
<dbReference type="SUPFAM" id="SSF50193">
    <property type="entry name" value="Ribosomal protein L14"/>
    <property type="match status" value="1"/>
</dbReference>
<dbReference type="PROSITE" id="PS00049">
    <property type="entry name" value="RIBOSOMAL_L14"/>
    <property type="match status" value="1"/>
</dbReference>
<reference key="1">
    <citation type="submission" date="2006-09" db="EMBL/GenBank/DDBJ databases">
        <authorList>
            <consortium name="The Klebsiella pneumonia Genome Sequencing Project"/>
            <person name="McClelland M."/>
            <person name="Sanderson E.K."/>
            <person name="Spieth J."/>
            <person name="Clifton W.S."/>
            <person name="Latreille P."/>
            <person name="Sabo A."/>
            <person name="Pepin K."/>
            <person name="Bhonagiri V."/>
            <person name="Porwollik S."/>
            <person name="Ali J."/>
            <person name="Wilson R.K."/>
        </authorList>
    </citation>
    <scope>NUCLEOTIDE SEQUENCE [LARGE SCALE GENOMIC DNA]</scope>
    <source>
        <strain>ATCC 700721 / MGH 78578</strain>
    </source>
</reference>
<feature type="chain" id="PRO_1000055600" description="Large ribosomal subunit protein uL14">
    <location>
        <begin position="1"/>
        <end position="123"/>
    </location>
</feature>
<keyword id="KW-0687">Ribonucleoprotein</keyword>
<keyword id="KW-0689">Ribosomal protein</keyword>
<keyword id="KW-0694">RNA-binding</keyword>
<keyword id="KW-0699">rRNA-binding</keyword>
<protein>
    <recommendedName>
        <fullName evidence="1">Large ribosomal subunit protein uL14</fullName>
    </recommendedName>
    <alternativeName>
        <fullName evidence="2">50S ribosomal protein L14</fullName>
    </alternativeName>
</protein>
<name>RL14_KLEP7</name>
<sequence>MIQEQTMLNVADNSGARRVMCIKVLGGSHRRYAGVGDIIKITIKEAIPRGKVKKGDVLKAVVVRTKKGVRRPDGSVIRFDGNACVILNNNSEQPIGTRIFGPVTRELRTEKFMKIISLAPEVL</sequence>
<proteinExistence type="inferred from homology"/>
<gene>
    <name evidence="1" type="primary">rplN</name>
    <name type="ordered locus">KPN78578_36720</name>
    <name type="ORF">KPN_03709</name>
</gene>
<accession>A6TEW2</accession>
<organism>
    <name type="scientific">Klebsiella pneumoniae subsp. pneumoniae (strain ATCC 700721 / MGH 78578)</name>
    <dbReference type="NCBI Taxonomy" id="272620"/>
    <lineage>
        <taxon>Bacteria</taxon>
        <taxon>Pseudomonadati</taxon>
        <taxon>Pseudomonadota</taxon>
        <taxon>Gammaproteobacteria</taxon>
        <taxon>Enterobacterales</taxon>
        <taxon>Enterobacteriaceae</taxon>
        <taxon>Klebsiella/Raoultella group</taxon>
        <taxon>Klebsiella</taxon>
        <taxon>Klebsiella pneumoniae complex</taxon>
    </lineage>
</organism>